<comment type="function">
    <text evidence="1">NDH shuttles electrons from NAD(P)H:plastoquinone, via FMN and iron-sulfur (Fe-S) centers, to quinones in the photosynthetic chain and possibly in a chloroplast respiratory chain. The immediate electron acceptor for the enzyme in this species is believed to be plastoquinone. Couples the redox reaction to proton translocation, and thus conserves the redox energy in a proton gradient.</text>
</comment>
<comment type="catalytic activity">
    <reaction evidence="1">
        <text>a plastoquinone + NADH + (n+1) H(+)(in) = a plastoquinol + NAD(+) + n H(+)(out)</text>
        <dbReference type="Rhea" id="RHEA:42608"/>
        <dbReference type="Rhea" id="RHEA-COMP:9561"/>
        <dbReference type="Rhea" id="RHEA-COMP:9562"/>
        <dbReference type="ChEBI" id="CHEBI:15378"/>
        <dbReference type="ChEBI" id="CHEBI:17757"/>
        <dbReference type="ChEBI" id="CHEBI:57540"/>
        <dbReference type="ChEBI" id="CHEBI:57945"/>
        <dbReference type="ChEBI" id="CHEBI:62192"/>
    </reaction>
</comment>
<comment type="catalytic activity">
    <reaction evidence="1">
        <text>a plastoquinone + NADPH + (n+1) H(+)(in) = a plastoquinol + NADP(+) + n H(+)(out)</text>
        <dbReference type="Rhea" id="RHEA:42612"/>
        <dbReference type="Rhea" id="RHEA-COMP:9561"/>
        <dbReference type="Rhea" id="RHEA-COMP:9562"/>
        <dbReference type="ChEBI" id="CHEBI:15378"/>
        <dbReference type="ChEBI" id="CHEBI:17757"/>
        <dbReference type="ChEBI" id="CHEBI:57783"/>
        <dbReference type="ChEBI" id="CHEBI:58349"/>
        <dbReference type="ChEBI" id="CHEBI:62192"/>
    </reaction>
</comment>
<comment type="subunit">
    <text evidence="1">NDH is composed of at least 16 different subunits, 5 of which are encoded in the nucleus.</text>
</comment>
<comment type="subcellular location">
    <subcellularLocation>
        <location evidence="1">Plastid</location>
        <location evidence="1">Chloroplast thylakoid membrane</location>
        <topology evidence="1">Multi-pass membrane protein</topology>
    </subcellularLocation>
</comment>
<comment type="similarity">
    <text evidence="1">Belongs to the complex I subunit 1 family.</text>
</comment>
<gene>
    <name evidence="1" type="primary">ndhA</name>
</gene>
<keyword id="KW-0150">Chloroplast</keyword>
<keyword id="KW-0472">Membrane</keyword>
<keyword id="KW-0520">NAD</keyword>
<keyword id="KW-0521">NADP</keyword>
<keyword id="KW-0934">Plastid</keyword>
<keyword id="KW-0618">Plastoquinone</keyword>
<keyword id="KW-0874">Quinone</keyword>
<keyword id="KW-0793">Thylakoid</keyword>
<keyword id="KW-1278">Translocase</keyword>
<keyword id="KW-0812">Transmembrane</keyword>
<keyword id="KW-1133">Transmembrane helix</keyword>
<feature type="chain" id="PRO_0000275577" description="NAD(P)H-quinone oxidoreductase subunit 1, chloroplastic">
    <location>
        <begin position="1"/>
        <end position="363"/>
    </location>
</feature>
<feature type="transmembrane region" description="Helical" evidence="1">
    <location>
        <begin position="28"/>
        <end position="48"/>
    </location>
</feature>
<feature type="transmembrane region" description="Helical" evidence="1">
    <location>
        <begin position="98"/>
        <end position="118"/>
    </location>
</feature>
<feature type="transmembrane region" description="Helical" evidence="1">
    <location>
        <begin position="129"/>
        <end position="149"/>
    </location>
</feature>
<feature type="transmembrane region" description="Helical" evidence="1">
    <location>
        <begin position="253"/>
        <end position="273"/>
    </location>
</feature>
<feature type="transmembrane region" description="Helical" evidence="1">
    <location>
        <begin position="274"/>
        <end position="294"/>
    </location>
</feature>
<feature type="transmembrane region" description="Helical" evidence="1">
    <location>
        <begin position="300"/>
        <end position="320"/>
    </location>
</feature>
<feature type="transmembrane region" description="Helical" evidence="1">
    <location>
        <begin position="336"/>
        <end position="356"/>
    </location>
</feature>
<evidence type="ECO:0000255" key="1">
    <source>
        <dbReference type="HAMAP-Rule" id="MF_01350"/>
    </source>
</evidence>
<protein>
    <recommendedName>
        <fullName evidence="1">NAD(P)H-quinone oxidoreductase subunit 1, chloroplastic</fullName>
        <ecNumber evidence="1">7.1.1.-</ecNumber>
    </recommendedName>
    <alternativeName>
        <fullName evidence="1">NAD(P)H dehydrogenase subunit 1</fullName>
        <shortName evidence="1">NDH subunit 1</shortName>
    </alternativeName>
    <alternativeName>
        <fullName evidence="1">NADH-plastoquinone oxidoreductase subunit 1</fullName>
    </alternativeName>
</protein>
<name>NU1C_CITSI</name>
<proteinExistence type="inferred from homology"/>
<accession>Q09MC1</accession>
<reference key="1">
    <citation type="journal article" date="2006" name="BMC Plant Biol.">
        <title>The complete chloroplast genome sequence of Citrus sinensis (L.) Osbeck var 'Ridge Pineapple': organization and phylogenetic relationships to other angiosperms.</title>
        <authorList>
            <person name="Bausher M.G."/>
            <person name="Singh N.D."/>
            <person name="Lee S.-B."/>
            <person name="Jansen R.K."/>
            <person name="Daniell H."/>
        </authorList>
    </citation>
    <scope>NUCLEOTIDE SEQUENCE [LARGE SCALE GENOMIC DNA]</scope>
    <source>
        <strain>cv. Osbeck var. Ridge Pineapple</strain>
    </source>
</reference>
<organism>
    <name type="scientific">Citrus sinensis</name>
    <name type="common">Sweet orange</name>
    <name type="synonym">Citrus aurantium var. sinensis</name>
    <dbReference type="NCBI Taxonomy" id="2711"/>
    <lineage>
        <taxon>Eukaryota</taxon>
        <taxon>Viridiplantae</taxon>
        <taxon>Streptophyta</taxon>
        <taxon>Embryophyta</taxon>
        <taxon>Tracheophyta</taxon>
        <taxon>Spermatophyta</taxon>
        <taxon>Magnoliopsida</taxon>
        <taxon>eudicotyledons</taxon>
        <taxon>Gunneridae</taxon>
        <taxon>Pentapetalae</taxon>
        <taxon>rosids</taxon>
        <taxon>malvids</taxon>
        <taxon>Sapindales</taxon>
        <taxon>Rutaceae</taxon>
        <taxon>Aurantioideae</taxon>
        <taxon>Citrus</taxon>
    </lineage>
</organism>
<geneLocation type="chloroplast"/>
<dbReference type="EC" id="7.1.1.-" evidence="1"/>
<dbReference type="EMBL" id="DQ864733">
    <property type="protein sequence ID" value="ABI49076.1"/>
    <property type="molecule type" value="Genomic_DNA"/>
</dbReference>
<dbReference type="RefSeq" id="YP_740532.1">
    <property type="nucleotide sequence ID" value="NC_008334.1"/>
</dbReference>
<dbReference type="SMR" id="Q09MC1"/>
<dbReference type="GeneID" id="4271144"/>
<dbReference type="KEGG" id="cit:4271144"/>
<dbReference type="OrthoDB" id="283102at71240"/>
<dbReference type="GO" id="GO:0009535">
    <property type="term" value="C:chloroplast thylakoid membrane"/>
    <property type="evidence" value="ECO:0007669"/>
    <property type="project" value="UniProtKB-SubCell"/>
</dbReference>
<dbReference type="GO" id="GO:0016655">
    <property type="term" value="F:oxidoreductase activity, acting on NAD(P)H, quinone or similar compound as acceptor"/>
    <property type="evidence" value="ECO:0007669"/>
    <property type="project" value="UniProtKB-UniRule"/>
</dbReference>
<dbReference type="GO" id="GO:0048038">
    <property type="term" value="F:quinone binding"/>
    <property type="evidence" value="ECO:0007669"/>
    <property type="project" value="UniProtKB-KW"/>
</dbReference>
<dbReference type="GO" id="GO:0019684">
    <property type="term" value="P:photosynthesis, light reaction"/>
    <property type="evidence" value="ECO:0007669"/>
    <property type="project" value="UniProtKB-UniRule"/>
</dbReference>
<dbReference type="HAMAP" id="MF_01350">
    <property type="entry name" value="NDH1_NuoH"/>
    <property type="match status" value="1"/>
</dbReference>
<dbReference type="InterPro" id="IPR001694">
    <property type="entry name" value="NADH_UbQ_OxRdtase_su1/FPO"/>
</dbReference>
<dbReference type="InterPro" id="IPR018086">
    <property type="entry name" value="NADH_UbQ_OxRdtase_su1_CS"/>
</dbReference>
<dbReference type="NCBIfam" id="NF004741">
    <property type="entry name" value="PRK06076.1-2"/>
    <property type="match status" value="1"/>
</dbReference>
<dbReference type="PANTHER" id="PTHR11432">
    <property type="entry name" value="NADH DEHYDROGENASE SUBUNIT 1"/>
    <property type="match status" value="1"/>
</dbReference>
<dbReference type="PANTHER" id="PTHR11432:SF3">
    <property type="entry name" value="NADH-UBIQUINONE OXIDOREDUCTASE CHAIN 1"/>
    <property type="match status" value="1"/>
</dbReference>
<dbReference type="Pfam" id="PF00146">
    <property type="entry name" value="NADHdh"/>
    <property type="match status" value="1"/>
</dbReference>
<dbReference type="PROSITE" id="PS00667">
    <property type="entry name" value="COMPLEX1_ND1_1"/>
    <property type="match status" value="1"/>
</dbReference>
<dbReference type="PROSITE" id="PS00668">
    <property type="entry name" value="COMPLEX1_ND1_2"/>
    <property type="match status" value="1"/>
</dbReference>
<sequence length="363" mass="39797">MIIATPEVQDINSFSRLESLQEVYGILWVLAPISIYVLAITIGVLVIVWLEREISAGIQQRIGPEYASPLGILQALADGTKLLFKENLLPSRGNSSLFSIGPSIAVIAILLSYSVIPFSYNLVLADLNIGIFLWIAISSIAPIGLLMSGYGSNNKYSFLGGLRAAAQSISYEIPLTLCVLSISLLSNSLSTVDIVGAQSKYGFWGWNLWRQPIGFIVFLISSLAECERLPFDLPEAEEELVAGYQTEYSGIKFGLFYVASYLNLLVSSLFVTVLYLGGSNLSIPYIFVPGLVEINKADGIFGTTIGIFITLAKTYLFLFIPIATRWTLPRLRMDQLLNLGWKFLLPISLGNLLLTTSSQLLSL</sequence>